<protein>
    <recommendedName>
        <fullName evidence="1">Mannitol-1-phosphate 5-dehydrogenase</fullName>
        <ecNumber evidence="1">1.1.1.17</ecNumber>
    </recommendedName>
</protein>
<sequence>MKAVHFGAGNIGRGFIGALLVDAGYEVTFVDVNEKIIDALNERNEYKVTVAGERKETETVTNVRGINSKTNEKEAIDAIAEADIVTTAVGPTVLPYIAKTIAQGLKQRTASKPVNMIACENAIRATSQLKKDVLSHLSEEETTALLKDAGFADAAVDRIVPNVQSDDILHVTVEPFFEWVVEKPALKGDAVQLGKAVLVEDLAPYIERKLFTVNTGHAVAAYVGYRKGKKTIKEALADDYIKHRVRGALNETKAMLVEEYQFDAEAHEDYIDKILLRFQNPHLEDLVERVGRGPIRKLGPADRLVKPAKYLAEKGLHPESLAETIFDALHFYAEGDPESEELRALVDEKGYVDAFCEISKLEKDHPLVEIVAKE</sequence>
<organism>
    <name type="scientific">Shouchella clausii (strain KSM-K16)</name>
    <name type="common">Alkalihalobacillus clausii</name>
    <dbReference type="NCBI Taxonomy" id="66692"/>
    <lineage>
        <taxon>Bacteria</taxon>
        <taxon>Bacillati</taxon>
        <taxon>Bacillota</taxon>
        <taxon>Bacilli</taxon>
        <taxon>Bacillales</taxon>
        <taxon>Bacillaceae</taxon>
        <taxon>Shouchella</taxon>
    </lineage>
</organism>
<reference key="1">
    <citation type="submission" date="2003-10" db="EMBL/GenBank/DDBJ databases">
        <title>The complete genome sequence of the alkaliphilic Bacillus clausii KSM-K16.</title>
        <authorList>
            <person name="Takaki Y."/>
            <person name="Kageyama Y."/>
            <person name="Shimamura S."/>
            <person name="Suzuki H."/>
            <person name="Nishi S."/>
            <person name="Hatada Y."/>
            <person name="Kawai S."/>
            <person name="Ito S."/>
            <person name="Horikoshi K."/>
        </authorList>
    </citation>
    <scope>NUCLEOTIDE SEQUENCE [LARGE SCALE GENOMIC DNA]</scope>
    <source>
        <strain>KSM-K16</strain>
    </source>
</reference>
<evidence type="ECO:0000255" key="1">
    <source>
        <dbReference type="HAMAP-Rule" id="MF_00196"/>
    </source>
</evidence>
<name>MTLD_SHOC1</name>
<proteinExistence type="inferred from homology"/>
<comment type="catalytic activity">
    <reaction evidence="1">
        <text>D-mannitol 1-phosphate + NAD(+) = beta-D-fructose 6-phosphate + NADH + H(+)</text>
        <dbReference type="Rhea" id="RHEA:19661"/>
        <dbReference type="ChEBI" id="CHEBI:15378"/>
        <dbReference type="ChEBI" id="CHEBI:57540"/>
        <dbReference type="ChEBI" id="CHEBI:57634"/>
        <dbReference type="ChEBI" id="CHEBI:57945"/>
        <dbReference type="ChEBI" id="CHEBI:61381"/>
        <dbReference type="EC" id="1.1.1.17"/>
    </reaction>
</comment>
<comment type="similarity">
    <text evidence="1">Belongs to the mannitol dehydrogenase family.</text>
</comment>
<gene>
    <name evidence="1" type="primary">mtlD</name>
    <name type="ordered locus">ABC2926</name>
</gene>
<feature type="chain" id="PRO_1000011796" description="Mannitol-1-phosphate 5-dehydrogenase">
    <location>
        <begin position="1"/>
        <end position="374"/>
    </location>
</feature>
<feature type="binding site" evidence="1">
    <location>
        <begin position="3"/>
        <end position="14"/>
    </location>
    <ligand>
        <name>NAD(+)</name>
        <dbReference type="ChEBI" id="CHEBI:57540"/>
    </ligand>
</feature>
<keyword id="KW-0520">NAD</keyword>
<keyword id="KW-0560">Oxidoreductase</keyword>
<keyword id="KW-1185">Reference proteome</keyword>
<accession>Q5WDV0</accession>
<dbReference type="EC" id="1.1.1.17" evidence="1"/>
<dbReference type="EMBL" id="AP006627">
    <property type="protein sequence ID" value="BAD65460.1"/>
    <property type="molecule type" value="Genomic_DNA"/>
</dbReference>
<dbReference type="RefSeq" id="WP_011247768.1">
    <property type="nucleotide sequence ID" value="NC_006582.1"/>
</dbReference>
<dbReference type="SMR" id="Q5WDV0"/>
<dbReference type="STRING" id="66692.ABC2926"/>
<dbReference type="KEGG" id="bcl:ABC2926"/>
<dbReference type="eggNOG" id="COG0246">
    <property type="taxonomic scope" value="Bacteria"/>
</dbReference>
<dbReference type="HOGENOM" id="CLU_036089_2_0_9"/>
<dbReference type="OrthoDB" id="271711at2"/>
<dbReference type="Proteomes" id="UP000001168">
    <property type="component" value="Chromosome"/>
</dbReference>
<dbReference type="GO" id="GO:0005829">
    <property type="term" value="C:cytosol"/>
    <property type="evidence" value="ECO:0007669"/>
    <property type="project" value="TreeGrafter"/>
</dbReference>
<dbReference type="GO" id="GO:0008926">
    <property type="term" value="F:mannitol-1-phosphate 5-dehydrogenase activity"/>
    <property type="evidence" value="ECO:0007669"/>
    <property type="project" value="UniProtKB-UniRule"/>
</dbReference>
<dbReference type="GO" id="GO:0019592">
    <property type="term" value="P:mannitol catabolic process"/>
    <property type="evidence" value="ECO:0007669"/>
    <property type="project" value="TreeGrafter"/>
</dbReference>
<dbReference type="Gene3D" id="1.10.1040.10">
    <property type="entry name" value="N-(1-d-carboxylethyl)-l-norvaline Dehydrogenase, domain 2"/>
    <property type="match status" value="1"/>
</dbReference>
<dbReference type="Gene3D" id="3.40.50.720">
    <property type="entry name" value="NAD(P)-binding Rossmann-like Domain"/>
    <property type="match status" value="1"/>
</dbReference>
<dbReference type="HAMAP" id="MF_00196">
    <property type="entry name" value="Mannitol_dehydrog"/>
    <property type="match status" value="1"/>
</dbReference>
<dbReference type="InterPro" id="IPR008927">
    <property type="entry name" value="6-PGluconate_DH-like_C_sf"/>
</dbReference>
<dbReference type="InterPro" id="IPR013328">
    <property type="entry name" value="6PGD_dom2"/>
</dbReference>
<dbReference type="InterPro" id="IPR023028">
    <property type="entry name" value="Mannitol_1_phos_5_DH"/>
</dbReference>
<dbReference type="InterPro" id="IPR000669">
    <property type="entry name" value="Mannitol_DH"/>
</dbReference>
<dbReference type="InterPro" id="IPR013118">
    <property type="entry name" value="Mannitol_DH_C"/>
</dbReference>
<dbReference type="InterPro" id="IPR013131">
    <property type="entry name" value="Mannitol_DH_N"/>
</dbReference>
<dbReference type="InterPro" id="IPR036291">
    <property type="entry name" value="NAD(P)-bd_dom_sf"/>
</dbReference>
<dbReference type="NCBIfam" id="NF002646">
    <property type="entry name" value="PRK02318.1-2"/>
    <property type="match status" value="1"/>
</dbReference>
<dbReference type="NCBIfam" id="NF002647">
    <property type="entry name" value="PRK02318.1-3"/>
    <property type="match status" value="1"/>
</dbReference>
<dbReference type="NCBIfam" id="NF002649">
    <property type="entry name" value="PRK02318.2-1"/>
    <property type="match status" value="1"/>
</dbReference>
<dbReference type="NCBIfam" id="NF002652">
    <property type="entry name" value="PRK02318.2-5"/>
    <property type="match status" value="1"/>
</dbReference>
<dbReference type="PANTHER" id="PTHR30524:SF0">
    <property type="entry name" value="ALTRONATE OXIDOREDUCTASE-RELATED"/>
    <property type="match status" value="1"/>
</dbReference>
<dbReference type="PANTHER" id="PTHR30524">
    <property type="entry name" value="MANNITOL-1-PHOSPHATE 5-DEHYDROGENASE"/>
    <property type="match status" value="1"/>
</dbReference>
<dbReference type="Pfam" id="PF01232">
    <property type="entry name" value="Mannitol_dh"/>
    <property type="match status" value="1"/>
</dbReference>
<dbReference type="Pfam" id="PF08125">
    <property type="entry name" value="Mannitol_dh_C"/>
    <property type="match status" value="1"/>
</dbReference>
<dbReference type="PRINTS" id="PR00084">
    <property type="entry name" value="MTLDHDRGNASE"/>
</dbReference>
<dbReference type="SUPFAM" id="SSF48179">
    <property type="entry name" value="6-phosphogluconate dehydrogenase C-terminal domain-like"/>
    <property type="match status" value="1"/>
</dbReference>
<dbReference type="SUPFAM" id="SSF51735">
    <property type="entry name" value="NAD(P)-binding Rossmann-fold domains"/>
    <property type="match status" value="1"/>
</dbReference>